<organism>
    <name type="scientific">Bothrops atrox</name>
    <name type="common">Barba amarilla</name>
    <name type="synonym">Fer-de-lance</name>
    <dbReference type="NCBI Taxonomy" id="8725"/>
    <lineage>
        <taxon>Eukaryota</taxon>
        <taxon>Metazoa</taxon>
        <taxon>Chordata</taxon>
        <taxon>Craniata</taxon>
        <taxon>Vertebrata</taxon>
        <taxon>Euteleostomi</taxon>
        <taxon>Lepidosauria</taxon>
        <taxon>Squamata</taxon>
        <taxon>Bifurcata</taxon>
        <taxon>Unidentata</taxon>
        <taxon>Episquamata</taxon>
        <taxon>Toxicofera</taxon>
        <taxon>Serpentes</taxon>
        <taxon>Colubroidea</taxon>
        <taxon>Viperidae</taxon>
        <taxon>Crotalinae</taxon>
        <taxon>Bothrops</taxon>
    </lineage>
</organism>
<name>VM32_BOTAT</name>
<comment type="function">
    <text evidence="1">Snake venom zinc metalloprotease that induces apoptosis in vascular endothelial cells (VEC), without degrading the extracellular matrix (it cannot cleave collagen) or inhibiting adhesion of VEC. Has also fibrinogenolytic and hemorrhagic activities (By similarity).</text>
</comment>
<comment type="cofactor">
    <cofactor evidence="1">
        <name>Zn(2+)</name>
        <dbReference type="ChEBI" id="CHEBI:29105"/>
    </cofactor>
    <text evidence="1">Binds 1 zinc ion per subunit.</text>
</comment>
<comment type="subunit">
    <text evidence="1">Homodimer; disulfide-linked.</text>
</comment>
<comment type="subcellular location">
    <subcellularLocation>
        <location evidence="1">Secreted</location>
    </subcellularLocation>
</comment>
<comment type="tissue specificity">
    <text>Expressed by the venom gland.</text>
</comment>
<comment type="similarity">
    <text evidence="6">Belongs to the venom metalloproteinase (M12B) family. P-III subfamily. P-IIIc sub-subfamily.</text>
</comment>
<reference key="1">
    <citation type="journal article" date="2008" name="Toxicon">
        <title>Expression of mRNAs coding for VAP1/crotastatin-like metalloproteases in the venom glands of three South American pit vipers assessed by quantitative real-time PCR.</title>
        <authorList>
            <person name="Tavares N.A.C."/>
            <person name="Correia J.M."/>
            <person name="Guarnieri M.C."/>
            <person name="Lima-Filho J.L."/>
            <person name="Prieto-da-Silva A.R.B."/>
            <person name="Radis-Baptista G."/>
        </authorList>
    </citation>
    <scope>NUCLEOTIDE SEQUENCE [MRNA]</scope>
    <source>
        <tissue>Venom gland</tissue>
    </source>
</reference>
<feature type="chain" id="PRO_0000418199" description="Zinc metalloproteinase-disintegrin-like batroxstatin-2">
    <location>
        <begin position="1"/>
        <end position="418" status="greater than"/>
    </location>
</feature>
<feature type="domain" description="Peptidase M12B" evidence="4">
    <location>
        <begin position="10"/>
        <end position="206"/>
    </location>
</feature>
<feature type="domain" description="Disintegrin" evidence="3">
    <location>
        <begin position="214"/>
        <end position="299"/>
    </location>
</feature>
<feature type="short sequence motif" description="D/ECD-tripeptide">
    <location>
        <begin position="278"/>
        <end position="280"/>
    </location>
</feature>
<feature type="active site" evidence="4 5">
    <location>
        <position position="147"/>
    </location>
</feature>
<feature type="binding site" evidence="1">
    <location>
        <position position="146"/>
    </location>
    <ligand>
        <name>Zn(2+)</name>
        <dbReference type="ChEBI" id="CHEBI:29105"/>
        <note>catalytic</note>
    </ligand>
</feature>
<feature type="binding site" evidence="1">
    <location>
        <position position="150"/>
    </location>
    <ligand>
        <name>Zn(2+)</name>
        <dbReference type="ChEBI" id="CHEBI:29105"/>
        <note>catalytic</note>
    </ligand>
</feature>
<feature type="binding site" evidence="1">
    <location>
        <position position="156"/>
    </location>
    <ligand>
        <name>Zn(2+)</name>
        <dbReference type="ChEBI" id="CHEBI:29105"/>
        <note>catalytic</note>
    </ligand>
</feature>
<feature type="binding site" evidence="1">
    <location>
        <position position="216"/>
    </location>
    <ligand>
        <name>Ca(2+)</name>
        <dbReference type="ChEBI" id="CHEBI:29108"/>
        <label>1</label>
    </ligand>
</feature>
<feature type="binding site" evidence="1">
    <location>
        <position position="219"/>
    </location>
    <ligand>
        <name>Ca(2+)</name>
        <dbReference type="ChEBI" id="CHEBI:29108"/>
        <label>1</label>
    </ligand>
</feature>
<feature type="binding site" evidence="1">
    <location>
        <position position="221"/>
    </location>
    <ligand>
        <name>Ca(2+)</name>
        <dbReference type="ChEBI" id="CHEBI:29108"/>
        <label>1</label>
    </ligand>
</feature>
<feature type="binding site" evidence="1">
    <location>
        <position position="223"/>
    </location>
    <ligand>
        <name>Ca(2+)</name>
        <dbReference type="ChEBI" id="CHEBI:29108"/>
        <label>1</label>
    </ligand>
</feature>
<feature type="binding site" evidence="1">
    <location>
        <position position="226"/>
    </location>
    <ligand>
        <name>Ca(2+)</name>
        <dbReference type="ChEBI" id="CHEBI:29108"/>
        <label>1</label>
    </ligand>
</feature>
<feature type="binding site" evidence="1">
    <location>
        <position position="229"/>
    </location>
    <ligand>
        <name>Ca(2+)</name>
        <dbReference type="ChEBI" id="CHEBI:29108"/>
        <label>1</label>
    </ligand>
</feature>
<feature type="binding site" evidence="1">
    <location>
        <position position="280"/>
    </location>
    <ligand>
        <name>Ca(2+)</name>
        <dbReference type="ChEBI" id="CHEBI:29108"/>
        <label>2</label>
    </ligand>
</feature>
<feature type="binding site" evidence="1">
    <location>
        <position position="281"/>
    </location>
    <ligand>
        <name>Ca(2+)</name>
        <dbReference type="ChEBI" id="CHEBI:29108"/>
        <label>2</label>
    </ligand>
</feature>
<feature type="binding site" evidence="1">
    <location>
        <position position="283"/>
    </location>
    <ligand>
        <name>Ca(2+)</name>
        <dbReference type="ChEBI" id="CHEBI:29108"/>
        <label>2</label>
    </ligand>
</feature>
<feature type="binding site" evidence="1">
    <location>
        <position position="294"/>
    </location>
    <ligand>
        <name>Ca(2+)</name>
        <dbReference type="ChEBI" id="CHEBI:29108"/>
        <label>2</label>
    </ligand>
</feature>
<feature type="binding site" evidence="1">
    <location>
        <position position="295"/>
    </location>
    <ligand>
        <name>Ca(2+)</name>
        <dbReference type="ChEBI" id="CHEBI:29108"/>
        <label>2</label>
    </ligand>
</feature>
<feature type="glycosylation site" description="N-linked (GlcNAc...) asparagine" evidence="2">
    <location>
        <position position="312"/>
    </location>
</feature>
<feature type="disulfide bond" evidence="1">
    <location>
        <begin position="121"/>
        <end position="201"/>
    </location>
</feature>
<feature type="disulfide bond" evidence="1">
    <location>
        <begin position="161"/>
        <end position="185"/>
    </location>
</feature>
<feature type="disulfide bond" evidence="1">
    <location>
        <begin position="163"/>
        <end position="168"/>
    </location>
</feature>
<feature type="disulfide bond" description="Interchain (with C-365)" evidence="3 4">
    <location>
        <position position="176"/>
    </location>
</feature>
<feature type="disulfide bond" evidence="1">
    <location>
        <begin position="217"/>
        <end position="246"/>
    </location>
</feature>
<feature type="disulfide bond" evidence="1">
    <location>
        <begin position="228"/>
        <end position="241"/>
    </location>
</feature>
<feature type="disulfide bond" evidence="1">
    <location>
        <begin position="230"/>
        <end position="236"/>
    </location>
</feature>
<feature type="disulfide bond" evidence="1">
    <location>
        <begin position="240"/>
        <end position="263"/>
    </location>
</feature>
<feature type="disulfide bond" evidence="1">
    <location>
        <begin position="254"/>
        <end position="260"/>
    </location>
</feature>
<feature type="disulfide bond" evidence="1">
    <location>
        <begin position="259"/>
        <end position="285"/>
    </location>
</feature>
<feature type="disulfide bond" evidence="1">
    <location>
        <begin position="272"/>
        <end position="292"/>
    </location>
</feature>
<feature type="disulfide bond" evidence="1">
    <location>
        <begin position="279"/>
        <end position="310"/>
    </location>
</feature>
<feature type="disulfide bond" evidence="1">
    <location>
        <begin position="303"/>
        <end position="315"/>
    </location>
</feature>
<feature type="disulfide bond" evidence="1">
    <location>
        <begin position="322"/>
        <end position="372"/>
    </location>
</feature>
<feature type="disulfide bond" evidence="1">
    <location>
        <begin position="337"/>
        <end position="383"/>
    </location>
</feature>
<feature type="disulfide bond" evidence="1">
    <location>
        <begin position="350"/>
        <end position="360"/>
    </location>
</feature>
<feature type="disulfide bond" evidence="1">
    <location>
        <begin position="367"/>
        <end position="409"/>
    </location>
</feature>
<feature type="disulfide bond" evidence="1">
    <location>
        <begin position="403"/>
        <end position="414"/>
    </location>
</feature>
<feature type="non-terminal residue">
    <location>
        <position position="418"/>
    </location>
</feature>
<dbReference type="EC" id="3.4.24.-"/>
<dbReference type="EMBL" id="EU733640">
    <property type="protein sequence ID" value="ACI02288.1"/>
    <property type="molecule type" value="mRNA"/>
</dbReference>
<dbReference type="SMR" id="C5H5D3"/>
<dbReference type="MEROPS" id="M12.315"/>
<dbReference type="GO" id="GO:0005576">
    <property type="term" value="C:extracellular region"/>
    <property type="evidence" value="ECO:0007669"/>
    <property type="project" value="UniProtKB-SubCell"/>
</dbReference>
<dbReference type="GO" id="GO:0005886">
    <property type="term" value="C:plasma membrane"/>
    <property type="evidence" value="ECO:0007669"/>
    <property type="project" value="TreeGrafter"/>
</dbReference>
<dbReference type="GO" id="GO:0046872">
    <property type="term" value="F:metal ion binding"/>
    <property type="evidence" value="ECO:0007669"/>
    <property type="project" value="UniProtKB-KW"/>
</dbReference>
<dbReference type="GO" id="GO:0004222">
    <property type="term" value="F:metalloendopeptidase activity"/>
    <property type="evidence" value="ECO:0007669"/>
    <property type="project" value="InterPro"/>
</dbReference>
<dbReference type="GO" id="GO:0090729">
    <property type="term" value="F:toxin activity"/>
    <property type="evidence" value="ECO:0007669"/>
    <property type="project" value="UniProtKB-KW"/>
</dbReference>
<dbReference type="GO" id="GO:0006915">
    <property type="term" value="P:apoptotic process"/>
    <property type="evidence" value="ECO:0007669"/>
    <property type="project" value="UniProtKB-KW"/>
</dbReference>
<dbReference type="GO" id="GO:0006508">
    <property type="term" value="P:proteolysis"/>
    <property type="evidence" value="ECO:0007669"/>
    <property type="project" value="UniProtKB-KW"/>
</dbReference>
<dbReference type="CDD" id="cd04269">
    <property type="entry name" value="ZnMc_adamalysin_II_like"/>
    <property type="match status" value="1"/>
</dbReference>
<dbReference type="FunFam" id="3.40.390.10:FF:000002">
    <property type="entry name" value="Disintegrin and metalloproteinase domain-containing protein 22"/>
    <property type="match status" value="1"/>
</dbReference>
<dbReference type="FunFam" id="4.10.70.10:FF:000001">
    <property type="entry name" value="Disintegrin and metalloproteinase domain-containing protein 22"/>
    <property type="match status" value="1"/>
</dbReference>
<dbReference type="Gene3D" id="3.40.390.10">
    <property type="entry name" value="Collagenase (Catalytic Domain)"/>
    <property type="match status" value="1"/>
</dbReference>
<dbReference type="Gene3D" id="4.10.70.10">
    <property type="entry name" value="Disintegrin domain"/>
    <property type="match status" value="1"/>
</dbReference>
<dbReference type="InterPro" id="IPR006586">
    <property type="entry name" value="ADAM_Cys-rich"/>
</dbReference>
<dbReference type="InterPro" id="IPR018358">
    <property type="entry name" value="Disintegrin_CS"/>
</dbReference>
<dbReference type="InterPro" id="IPR001762">
    <property type="entry name" value="Disintegrin_dom"/>
</dbReference>
<dbReference type="InterPro" id="IPR036436">
    <property type="entry name" value="Disintegrin_dom_sf"/>
</dbReference>
<dbReference type="InterPro" id="IPR024079">
    <property type="entry name" value="MetalloPept_cat_dom_sf"/>
</dbReference>
<dbReference type="InterPro" id="IPR001590">
    <property type="entry name" value="Peptidase_M12B"/>
</dbReference>
<dbReference type="InterPro" id="IPR034027">
    <property type="entry name" value="Reprolysin_adamalysin"/>
</dbReference>
<dbReference type="PANTHER" id="PTHR11905">
    <property type="entry name" value="ADAM A DISINTEGRIN AND METALLOPROTEASE DOMAIN"/>
    <property type="match status" value="1"/>
</dbReference>
<dbReference type="PANTHER" id="PTHR11905:SF32">
    <property type="entry name" value="DISINTEGRIN AND METALLOPROTEINASE DOMAIN-CONTAINING PROTEIN 28"/>
    <property type="match status" value="1"/>
</dbReference>
<dbReference type="Pfam" id="PF08516">
    <property type="entry name" value="ADAM_CR"/>
    <property type="match status" value="1"/>
</dbReference>
<dbReference type="Pfam" id="PF00200">
    <property type="entry name" value="Disintegrin"/>
    <property type="match status" value="1"/>
</dbReference>
<dbReference type="Pfam" id="PF01421">
    <property type="entry name" value="Reprolysin"/>
    <property type="match status" value="1"/>
</dbReference>
<dbReference type="PRINTS" id="PR00289">
    <property type="entry name" value="DISINTEGRIN"/>
</dbReference>
<dbReference type="SMART" id="SM00608">
    <property type="entry name" value="ACR"/>
    <property type="match status" value="1"/>
</dbReference>
<dbReference type="SMART" id="SM00050">
    <property type="entry name" value="DISIN"/>
    <property type="match status" value="1"/>
</dbReference>
<dbReference type="SUPFAM" id="SSF57552">
    <property type="entry name" value="Blood coagulation inhibitor (disintegrin)"/>
    <property type="match status" value="1"/>
</dbReference>
<dbReference type="SUPFAM" id="SSF55486">
    <property type="entry name" value="Metalloproteases ('zincins'), catalytic domain"/>
    <property type="match status" value="1"/>
</dbReference>
<dbReference type="PROSITE" id="PS50215">
    <property type="entry name" value="ADAM_MEPRO"/>
    <property type="match status" value="1"/>
</dbReference>
<dbReference type="PROSITE" id="PS00427">
    <property type="entry name" value="DISINTEGRIN_1"/>
    <property type="match status" value="1"/>
</dbReference>
<dbReference type="PROSITE" id="PS50214">
    <property type="entry name" value="DISINTEGRIN_2"/>
    <property type="match status" value="1"/>
</dbReference>
<dbReference type="PROSITE" id="PS00142">
    <property type="entry name" value="ZINC_PROTEASE"/>
    <property type="match status" value="1"/>
</dbReference>
<keyword id="KW-0053">Apoptosis</keyword>
<keyword id="KW-0106">Calcium</keyword>
<keyword id="KW-1217">Cell adhesion impairing toxin</keyword>
<keyword id="KW-1015">Disulfide bond</keyword>
<keyword id="KW-1206">Fibrinogenolytic toxin</keyword>
<keyword id="KW-0325">Glycoprotein</keyword>
<keyword id="KW-1200">Hemorrhagic toxin</keyword>
<keyword id="KW-1199">Hemostasis impairing toxin</keyword>
<keyword id="KW-0378">Hydrolase</keyword>
<keyword id="KW-0479">Metal-binding</keyword>
<keyword id="KW-0482">Metalloprotease</keyword>
<keyword id="KW-0645">Protease</keyword>
<keyword id="KW-0964">Secreted</keyword>
<keyword id="KW-0800">Toxin</keyword>
<keyword id="KW-0862">Zinc</keyword>
<proteinExistence type="evidence at transcript level"/>
<protein>
    <recommendedName>
        <fullName>Zinc metalloproteinase-disintegrin-like batroxstatin-2</fullName>
        <ecNumber>3.4.24.-</ecNumber>
    </recommendedName>
    <alternativeName>
        <fullName>Snake venom metalloprotease</fullName>
        <shortName>SVMP</shortName>
    </alternativeName>
    <alternativeName>
        <fullName>Vascular apoptosis-inducing protein-like</fullName>
        <shortName>VAP-like</shortName>
    </alternativeName>
</protein>
<accession>C5H5D3</accession>
<evidence type="ECO:0000250" key="1"/>
<evidence type="ECO:0000255" key="2"/>
<evidence type="ECO:0000255" key="3">
    <source>
        <dbReference type="PROSITE-ProRule" id="PRU00068"/>
    </source>
</evidence>
<evidence type="ECO:0000255" key="4">
    <source>
        <dbReference type="PROSITE-ProRule" id="PRU00276"/>
    </source>
</evidence>
<evidence type="ECO:0000255" key="5">
    <source>
        <dbReference type="PROSITE-ProRule" id="PRU10095"/>
    </source>
</evidence>
<evidence type="ECO:0000305" key="6"/>
<sequence length="418" mass="46303">EQQRYLNAKKYVKLVLVADYIMYLKYGRSLTTLRTRMYDIVNIINLIFQRMNIHVALVGLEIWSNRDKIIVQSSADVTLDLFAKWRETDLLKRKSHDNAQLLTGINFNGPTAGLAYLSGICKPMYSAGIVQDHNKVHHLVAIAMAHEMGHNLGMDHDKDTCTCGARSCVMAGTLSCEPSYLFSDCSRRGHRAFLIKDMPQCILEKPLRTDVVSPPVCGNYFVEVGEECDCGSPATCRDTCCDAATCKLRQGAQCAEGLCCDQCRFKGAGTECRAAKDECDMADLCTGRSAECTDRFQRNGQPCQNNNGYCYNGTCPIMRDQCIALFGPNAAVSQDACFQFNLQGNHYGYCRKEQNTKIACEPQDVKCGRLYCFPSSPATKNPCNIHYSPNDEDKGMVLPGTKCADGKACSNGRCVDVT</sequence>